<keyword id="KW-0274">FAD</keyword>
<keyword id="KW-0285">Flavoprotein</keyword>
<keyword id="KW-0560">Oxidoreductase</keyword>
<proteinExistence type="inferred from homology"/>
<comment type="function">
    <text evidence="2 5">FAD-linked oxidoreductase; part of the gene cluster that mediates the biosynthesis of the indole diterpenes nodulisporic acids (NA). Nodulisporic acid A (NAA) and its chemically modified derivatives are of particular significance because of their highly potent insecticidal activity against blood-feeding arthropods and lack of observable adverse effects on mammals, in particular the tremogenicity associated with the paspaline-derived IDTs is not observed (PubMed:29283570). The geranylgeranyl diphosphate (GGPP) synthase ggs1, localized outside of the cluster, is proposed to catalyze the first step in nodulisporic acid biosynthesis via conversion of farnesyl pyrophosphate and isopentyl pyrophosphate into geranylgeranyl pyrophosphate (GGPP) (PubMed:29283570). Condensation of indole-3-glycerol phosphate with GGPP by the prenyl transferase nodC then forms 3-geranylgeranylindole (3-GGI) (PubMed:29283570). Epoxidation by the FAD-dependent monooxygenase nodM leads to a single-epoxidized-GGI that is substrate of the terpene cyclase nodB for cyclization to yield emindole SB (PubMed:29283570). The terminal methyl carbon, C28, of emindole SB is then oxidized by the cytochrome P450 monooxygenase nodW to produce nodulisporic acid F (NAF), the pentacyclic core of NAA (PubMed:29283570). NAF is converted to nodulisporic acid E (NAE) via prenylation. This step is probably performed by one of the indole diterpene prenyltransferases nodD1 or nodD2 (Probable). Several oxidation steps performed by the FAD-linked oxidoreductase nodO and one of the cytochrome P450 monooxygenase nodR, nodX or nodZ further convert NAE to nodulisporic acid D (NAD) (Probable). NAD is substrate of cytochrome P450 monooxygenase nodJ to produce the precursor of nodulisporic acid C (NAC), converted to NAC by one of the indole diterpene prenyltransferases nodD1 or nodD2 (Probable). The FAD-dependent monooxygenase nodY2 then oxidizes NAC to nodulisporic acid B (NAB) (Probable). Finally NAB is converted to NAA by one of the cytochrome P450 monooxygenases nodR, nodX or nodZ (Probable).</text>
</comment>
<comment type="cofactor">
    <cofactor evidence="4">
        <name>FAD</name>
        <dbReference type="ChEBI" id="CHEBI:57692"/>
    </cofactor>
</comment>
<comment type="pathway">
    <text evidence="5">Secondary metabolite biosynthesis.</text>
</comment>
<comment type="similarity">
    <text evidence="4">Belongs to the oxygen-dependent FAD-linked oxidoreductase family.</text>
</comment>
<feature type="chain" id="PRO_0000446567" description="FAD-linked oxidoreductase nodO">
    <location>
        <begin position="1"/>
        <end position="448"/>
    </location>
</feature>
<feature type="domain" description="FAD-binding PCMH-type" evidence="1">
    <location>
        <begin position="35"/>
        <end position="206"/>
    </location>
</feature>
<organism>
    <name type="scientific">Hypoxylon pulicicidum</name>
    <dbReference type="NCBI Taxonomy" id="1243767"/>
    <lineage>
        <taxon>Eukaryota</taxon>
        <taxon>Fungi</taxon>
        <taxon>Dikarya</taxon>
        <taxon>Ascomycota</taxon>
        <taxon>Pezizomycotina</taxon>
        <taxon>Sordariomycetes</taxon>
        <taxon>Xylariomycetidae</taxon>
        <taxon>Xylariales</taxon>
        <taxon>Hypoxylaceae</taxon>
        <taxon>Hypoxylon</taxon>
    </lineage>
</organism>
<sequence length="448" mass="50159">MEVSSSETLPILWRTSPPSNDYENARCRVFNGRQPEHFPLAIVKANKVEHIVAAVKLAAELDACIAVRSGGHSLSCWTIRHGAILIDLEDYQHLSYDDEIHEVQASPSTLGADLLTFLAKKKRFFPVGHSGDIGLGGYLLQGGIGLNSRGYGYACEYITGLDIITADGEIKHCDKTENSDLYWAARGAGPEFPAIVIRFFLKTCPLLPVCKRSRYVWPAAMYGKVFKWLEELLNSLSEDVEIAVFGFVLPRLNQPGLVLHATAFGDSSENVREKLTPIIKNHPPGTFLAEDFVSTNFPEDYDLGKDTMPRGARYFTDSVFLKPGIDFVATCKGMFTELKHPRALAYWQPMKTNIDRILPDMAMSIHSHHYVSLLAIYEDPSEDQQQISWIIDRMKSLEPAILGTFIGDAHPVERPSNYWSEEAEERVITIGRKWDPSSRIRGIVLSDA</sequence>
<name>NODO_HYPPI</name>
<evidence type="ECO:0000255" key="1">
    <source>
        <dbReference type="PROSITE-ProRule" id="PRU00718"/>
    </source>
</evidence>
<evidence type="ECO:0000269" key="2">
    <source>
    </source>
</evidence>
<evidence type="ECO:0000303" key="3">
    <source>
    </source>
</evidence>
<evidence type="ECO:0000305" key="4"/>
<evidence type="ECO:0000305" key="5">
    <source>
    </source>
</evidence>
<protein>
    <recommendedName>
        <fullName evidence="3">FAD-linked oxidoreductase nodO</fullName>
        <ecNumber evidence="5">1.1.1.-</ecNumber>
    </recommendedName>
    <alternativeName>
        <fullName evidence="3">Nodulisporic acid biosynthesis cluster protein O</fullName>
    </alternativeName>
</protein>
<accession>A0A2I6PJ02</accession>
<reference key="1">
    <citation type="journal article" date="2018" name="J. Am. Chem. Soc.">
        <title>Heterologous biosynthesis of nodulisporic acid F.</title>
        <authorList>
            <person name="Van de Bittner K.C."/>
            <person name="Nicholson M.J."/>
            <person name="Bustamante L.Y."/>
            <person name="Kessans S.A."/>
            <person name="Ram A."/>
            <person name="van Dolleweerd C.J."/>
            <person name="Scott B."/>
            <person name="Parker E.J."/>
        </authorList>
    </citation>
    <scope>NUCLEOTIDE SEQUENCE [GENOMIC DNA]</scope>
    <scope>IDENTIFICATION</scope>
    <scope>FUNCTION</scope>
    <scope>PATHWAY</scope>
    <source>
        <strain>MF5954 / ATCC 74245</strain>
    </source>
</reference>
<gene>
    <name evidence="3" type="primary">nodO</name>
</gene>
<dbReference type="EC" id="1.1.1.-" evidence="5"/>
<dbReference type="EMBL" id="MG182145">
    <property type="protein sequence ID" value="AUM60052.1"/>
    <property type="molecule type" value="Genomic_DNA"/>
</dbReference>
<dbReference type="SMR" id="A0A2I6PJ02"/>
<dbReference type="GO" id="GO:0071949">
    <property type="term" value="F:FAD binding"/>
    <property type="evidence" value="ECO:0007669"/>
    <property type="project" value="InterPro"/>
</dbReference>
<dbReference type="GO" id="GO:0016491">
    <property type="term" value="F:oxidoreductase activity"/>
    <property type="evidence" value="ECO:0007669"/>
    <property type="project" value="UniProtKB-KW"/>
</dbReference>
<dbReference type="Gene3D" id="3.30.465.10">
    <property type="match status" value="1"/>
</dbReference>
<dbReference type="Gene3D" id="3.40.462.20">
    <property type="match status" value="1"/>
</dbReference>
<dbReference type="InterPro" id="IPR016166">
    <property type="entry name" value="FAD-bd_PCMH"/>
</dbReference>
<dbReference type="InterPro" id="IPR036318">
    <property type="entry name" value="FAD-bd_PCMH-like_sf"/>
</dbReference>
<dbReference type="InterPro" id="IPR016169">
    <property type="entry name" value="FAD-bd_PCMH_sub2"/>
</dbReference>
<dbReference type="InterPro" id="IPR050416">
    <property type="entry name" value="FAD-linked_Oxidoreductase"/>
</dbReference>
<dbReference type="InterPro" id="IPR006094">
    <property type="entry name" value="Oxid_FAD_bind_N"/>
</dbReference>
<dbReference type="PANTHER" id="PTHR42973">
    <property type="entry name" value="BINDING OXIDOREDUCTASE, PUTATIVE (AFU_ORTHOLOGUE AFUA_1G17690)-RELATED"/>
    <property type="match status" value="1"/>
</dbReference>
<dbReference type="PANTHER" id="PTHR42973:SF39">
    <property type="entry name" value="FAD-BINDING PCMH-TYPE DOMAIN-CONTAINING PROTEIN"/>
    <property type="match status" value="1"/>
</dbReference>
<dbReference type="Pfam" id="PF01565">
    <property type="entry name" value="FAD_binding_4"/>
    <property type="match status" value="1"/>
</dbReference>
<dbReference type="SUPFAM" id="SSF56176">
    <property type="entry name" value="FAD-binding/transporter-associated domain-like"/>
    <property type="match status" value="1"/>
</dbReference>
<dbReference type="PROSITE" id="PS51387">
    <property type="entry name" value="FAD_PCMH"/>
    <property type="match status" value="1"/>
</dbReference>